<evidence type="ECO:0000255" key="1">
    <source>
        <dbReference type="HAMAP-Rule" id="MF_00049"/>
    </source>
</evidence>
<comment type="catalytic activity">
    <reaction evidence="1">
        <text>tRNA(Leu) + L-leucine + ATP = L-leucyl-tRNA(Leu) + AMP + diphosphate</text>
        <dbReference type="Rhea" id="RHEA:11688"/>
        <dbReference type="Rhea" id="RHEA-COMP:9613"/>
        <dbReference type="Rhea" id="RHEA-COMP:9622"/>
        <dbReference type="ChEBI" id="CHEBI:30616"/>
        <dbReference type="ChEBI" id="CHEBI:33019"/>
        <dbReference type="ChEBI" id="CHEBI:57427"/>
        <dbReference type="ChEBI" id="CHEBI:78442"/>
        <dbReference type="ChEBI" id="CHEBI:78494"/>
        <dbReference type="ChEBI" id="CHEBI:456215"/>
        <dbReference type="EC" id="6.1.1.4"/>
    </reaction>
</comment>
<comment type="subcellular location">
    <subcellularLocation>
        <location evidence="1">Cytoplasm</location>
    </subcellularLocation>
</comment>
<comment type="similarity">
    <text evidence="1">Belongs to the class-I aminoacyl-tRNA synthetase family.</text>
</comment>
<reference key="1">
    <citation type="journal article" date="2006" name="J. Bacteriol.">
        <title>The genome sequence of the obligately chemolithoautotrophic, facultatively anaerobic bacterium Thiobacillus denitrificans.</title>
        <authorList>
            <person name="Beller H.R."/>
            <person name="Chain P.S."/>
            <person name="Letain T.E."/>
            <person name="Chakicherla A."/>
            <person name="Larimer F.W."/>
            <person name="Richardson P.M."/>
            <person name="Coleman M.A."/>
            <person name="Wood A.P."/>
            <person name="Kelly D.P."/>
        </authorList>
    </citation>
    <scope>NUCLEOTIDE SEQUENCE [LARGE SCALE GENOMIC DNA]</scope>
    <source>
        <strain>ATCC 25259 / T1</strain>
    </source>
</reference>
<gene>
    <name evidence="1" type="primary">leuS</name>
    <name type="ordered locus">Tbd_2445</name>
</gene>
<protein>
    <recommendedName>
        <fullName evidence="1">Leucine--tRNA ligase</fullName>
        <ecNumber evidence="1">6.1.1.4</ecNumber>
    </recommendedName>
    <alternativeName>
        <fullName evidence="1">Leucyl-tRNA synthetase</fullName>
        <shortName evidence="1">LeuRS</shortName>
    </alternativeName>
</protein>
<sequence length="857" mass="94939">MQEKYLPSEIERAGQARWTADQTYRAADASDRPKYYCLSMFPYPSGKLHMGHVRNYTIGDVLARYHALRGFNVMQPMGWDAFGLPAENAAIANGVPPAQWTYANIDHMRTQLQALGFAIDWSRELATCKPDYYRWEQWLFTRLFEKGVIYKKMATVNWDPVDQTVLANEQVIDGRGWRSGALVEKRDIPMYFFRITQYADELLSGLDTLPGWPERVKTMQANWIGKSTGVRLAFPYELDGSQEKLWVFTTRADTLMGVTFVAVAAEHPLAARAAENNPELAAFVAECKQGSVAEADMATMEKKGMDTGFKVTHPLTGEEVPVWVGNYVLMSYGEGAVMAVPAHDERDFGFAKKYDLPIKQVIGVDGETFSLDAWAEWYGDKTRGQCVNSGKYDRLGYEAAVDAIAADLAAKGLGEKKTQFRLRDWGISRQRYWGCPIPIIHCETCGDVPVPAEQLPVVLPEDVVPDGSGNPLNKRADFVNCTCPACGAPARRETDTMDTFVESSWYYARYACPDYADGMLDARADQWLPVDQYIGGIEHAILHLLYARFFHKLMRDEGLVASDEPFANLLTQGMVVADTYYREDAGGKKTWFNPADVETKDGVATLRADGKPVVVGGTEKMSKSKNNGVDPQALIDQYGADTARLFTMFAAPPEQSLEWSDAGVEGAHRFLRRLWKTVYEHVQAGPVVTRAGGALPEPLKALRRQLHQTIQKVGDDIERRKQFNTAIAAVMELMNALAKLDGMDADTRAVRQETLEAVAVLLAPIVPHVGEAIHAELRPGAAMRWPEVDAAALVQDEIELMLQVNGKLRGQIRVAAGADKPAIEAAALASEAVQKYLAGQTPKKVVVVPGRLVNIVA</sequence>
<accession>Q3SG58</accession>
<name>SYL_THIDA</name>
<proteinExistence type="inferred from homology"/>
<organism>
    <name type="scientific">Thiobacillus denitrificans (strain ATCC 25259 / T1)</name>
    <dbReference type="NCBI Taxonomy" id="292415"/>
    <lineage>
        <taxon>Bacteria</taxon>
        <taxon>Pseudomonadati</taxon>
        <taxon>Pseudomonadota</taxon>
        <taxon>Betaproteobacteria</taxon>
        <taxon>Nitrosomonadales</taxon>
        <taxon>Thiobacillaceae</taxon>
        <taxon>Thiobacillus</taxon>
    </lineage>
</organism>
<feature type="chain" id="PRO_1000009458" description="Leucine--tRNA ligase">
    <location>
        <begin position="1"/>
        <end position="857"/>
    </location>
</feature>
<feature type="short sequence motif" description="'HIGH' region">
    <location>
        <begin position="42"/>
        <end position="52"/>
    </location>
</feature>
<feature type="short sequence motif" description="'KMSKS' region">
    <location>
        <begin position="620"/>
        <end position="624"/>
    </location>
</feature>
<feature type="binding site" evidence="1">
    <location>
        <position position="623"/>
    </location>
    <ligand>
        <name>ATP</name>
        <dbReference type="ChEBI" id="CHEBI:30616"/>
    </ligand>
</feature>
<dbReference type="EC" id="6.1.1.4" evidence="1"/>
<dbReference type="EMBL" id="CP000116">
    <property type="protein sequence ID" value="AAZ98398.1"/>
    <property type="molecule type" value="Genomic_DNA"/>
</dbReference>
<dbReference type="RefSeq" id="WP_011312957.1">
    <property type="nucleotide sequence ID" value="NC_007404.1"/>
</dbReference>
<dbReference type="SMR" id="Q3SG58"/>
<dbReference type="STRING" id="292415.Tbd_2445"/>
<dbReference type="KEGG" id="tbd:Tbd_2445"/>
<dbReference type="eggNOG" id="COG0495">
    <property type="taxonomic scope" value="Bacteria"/>
</dbReference>
<dbReference type="HOGENOM" id="CLU_004427_0_0_4"/>
<dbReference type="OrthoDB" id="9810365at2"/>
<dbReference type="Proteomes" id="UP000008291">
    <property type="component" value="Chromosome"/>
</dbReference>
<dbReference type="GO" id="GO:0005829">
    <property type="term" value="C:cytosol"/>
    <property type="evidence" value="ECO:0007669"/>
    <property type="project" value="TreeGrafter"/>
</dbReference>
<dbReference type="GO" id="GO:0002161">
    <property type="term" value="F:aminoacyl-tRNA deacylase activity"/>
    <property type="evidence" value="ECO:0007669"/>
    <property type="project" value="InterPro"/>
</dbReference>
<dbReference type="GO" id="GO:0005524">
    <property type="term" value="F:ATP binding"/>
    <property type="evidence" value="ECO:0007669"/>
    <property type="project" value="UniProtKB-UniRule"/>
</dbReference>
<dbReference type="GO" id="GO:0004823">
    <property type="term" value="F:leucine-tRNA ligase activity"/>
    <property type="evidence" value="ECO:0007669"/>
    <property type="project" value="UniProtKB-UniRule"/>
</dbReference>
<dbReference type="GO" id="GO:0006429">
    <property type="term" value="P:leucyl-tRNA aminoacylation"/>
    <property type="evidence" value="ECO:0007669"/>
    <property type="project" value="UniProtKB-UniRule"/>
</dbReference>
<dbReference type="CDD" id="cd07958">
    <property type="entry name" value="Anticodon_Ia_Leu_BEm"/>
    <property type="match status" value="1"/>
</dbReference>
<dbReference type="CDD" id="cd00812">
    <property type="entry name" value="LeuRS_core"/>
    <property type="match status" value="1"/>
</dbReference>
<dbReference type="FunFam" id="1.10.730.10:FF:000003">
    <property type="entry name" value="Leucine--tRNA ligase"/>
    <property type="match status" value="1"/>
</dbReference>
<dbReference type="FunFam" id="2.20.28.290:FF:000001">
    <property type="entry name" value="Leucine--tRNA ligase"/>
    <property type="match status" value="1"/>
</dbReference>
<dbReference type="FunFam" id="3.10.20.590:FF:000001">
    <property type="entry name" value="Leucine--tRNA ligase"/>
    <property type="match status" value="1"/>
</dbReference>
<dbReference type="FunFam" id="3.40.50.620:FF:000003">
    <property type="entry name" value="Leucine--tRNA ligase"/>
    <property type="match status" value="1"/>
</dbReference>
<dbReference type="FunFam" id="3.40.50.620:FF:000124">
    <property type="entry name" value="Leucine--tRNA ligase"/>
    <property type="match status" value="1"/>
</dbReference>
<dbReference type="FunFam" id="3.90.740.10:FF:000012">
    <property type="entry name" value="Leucine--tRNA ligase"/>
    <property type="match status" value="1"/>
</dbReference>
<dbReference type="Gene3D" id="2.20.28.290">
    <property type="match status" value="1"/>
</dbReference>
<dbReference type="Gene3D" id="3.10.20.590">
    <property type="match status" value="1"/>
</dbReference>
<dbReference type="Gene3D" id="3.40.50.620">
    <property type="entry name" value="HUPs"/>
    <property type="match status" value="2"/>
</dbReference>
<dbReference type="Gene3D" id="1.10.730.10">
    <property type="entry name" value="Isoleucyl-tRNA Synthetase, Domain 1"/>
    <property type="match status" value="1"/>
</dbReference>
<dbReference type="Gene3D" id="3.90.740.10">
    <property type="entry name" value="Valyl/Leucyl/Isoleucyl-tRNA synthetase, editing domain"/>
    <property type="match status" value="1"/>
</dbReference>
<dbReference type="HAMAP" id="MF_00049_B">
    <property type="entry name" value="Leu_tRNA_synth_B"/>
    <property type="match status" value="1"/>
</dbReference>
<dbReference type="InterPro" id="IPR001412">
    <property type="entry name" value="aa-tRNA-synth_I_CS"/>
</dbReference>
<dbReference type="InterPro" id="IPR002300">
    <property type="entry name" value="aa-tRNA-synth_Ia"/>
</dbReference>
<dbReference type="InterPro" id="IPR002302">
    <property type="entry name" value="Leu-tRNA-ligase"/>
</dbReference>
<dbReference type="InterPro" id="IPR025709">
    <property type="entry name" value="Leu_tRNA-synth_edit"/>
</dbReference>
<dbReference type="InterPro" id="IPR013155">
    <property type="entry name" value="M/V/L/I-tRNA-synth_anticd-bd"/>
</dbReference>
<dbReference type="InterPro" id="IPR015413">
    <property type="entry name" value="Methionyl/Leucyl_tRNA_Synth"/>
</dbReference>
<dbReference type="InterPro" id="IPR014729">
    <property type="entry name" value="Rossmann-like_a/b/a_fold"/>
</dbReference>
<dbReference type="InterPro" id="IPR009080">
    <property type="entry name" value="tRNAsynth_Ia_anticodon-bd"/>
</dbReference>
<dbReference type="InterPro" id="IPR009008">
    <property type="entry name" value="Val/Leu/Ile-tRNA-synth_edit"/>
</dbReference>
<dbReference type="NCBIfam" id="TIGR00396">
    <property type="entry name" value="leuS_bact"/>
    <property type="match status" value="1"/>
</dbReference>
<dbReference type="PANTHER" id="PTHR43740:SF2">
    <property type="entry name" value="LEUCINE--TRNA LIGASE, MITOCHONDRIAL"/>
    <property type="match status" value="1"/>
</dbReference>
<dbReference type="PANTHER" id="PTHR43740">
    <property type="entry name" value="LEUCYL-TRNA SYNTHETASE"/>
    <property type="match status" value="1"/>
</dbReference>
<dbReference type="Pfam" id="PF08264">
    <property type="entry name" value="Anticodon_1"/>
    <property type="match status" value="1"/>
</dbReference>
<dbReference type="Pfam" id="PF00133">
    <property type="entry name" value="tRNA-synt_1"/>
    <property type="match status" value="2"/>
</dbReference>
<dbReference type="Pfam" id="PF13603">
    <property type="entry name" value="tRNA-synt_1_2"/>
    <property type="match status" value="1"/>
</dbReference>
<dbReference type="Pfam" id="PF09334">
    <property type="entry name" value="tRNA-synt_1g"/>
    <property type="match status" value="1"/>
</dbReference>
<dbReference type="PRINTS" id="PR00985">
    <property type="entry name" value="TRNASYNTHLEU"/>
</dbReference>
<dbReference type="SUPFAM" id="SSF47323">
    <property type="entry name" value="Anticodon-binding domain of a subclass of class I aminoacyl-tRNA synthetases"/>
    <property type="match status" value="1"/>
</dbReference>
<dbReference type="SUPFAM" id="SSF52374">
    <property type="entry name" value="Nucleotidylyl transferase"/>
    <property type="match status" value="1"/>
</dbReference>
<dbReference type="SUPFAM" id="SSF50677">
    <property type="entry name" value="ValRS/IleRS/LeuRS editing domain"/>
    <property type="match status" value="1"/>
</dbReference>
<dbReference type="PROSITE" id="PS00178">
    <property type="entry name" value="AA_TRNA_LIGASE_I"/>
    <property type="match status" value="1"/>
</dbReference>
<keyword id="KW-0030">Aminoacyl-tRNA synthetase</keyword>
<keyword id="KW-0067">ATP-binding</keyword>
<keyword id="KW-0963">Cytoplasm</keyword>
<keyword id="KW-0436">Ligase</keyword>
<keyword id="KW-0547">Nucleotide-binding</keyword>
<keyword id="KW-0648">Protein biosynthesis</keyword>
<keyword id="KW-1185">Reference proteome</keyword>